<name>PYRH_THESM</name>
<dbReference type="EC" id="2.7.4.22" evidence="1"/>
<dbReference type="EMBL" id="CP001463">
    <property type="protein sequence ID" value="ACS90374.1"/>
    <property type="molecule type" value="Genomic_DNA"/>
</dbReference>
<dbReference type="RefSeq" id="WP_015849592.1">
    <property type="nucleotide sequence ID" value="NC_012883.1"/>
</dbReference>
<dbReference type="SMR" id="C6A429"/>
<dbReference type="STRING" id="604354.TSIB_1322"/>
<dbReference type="GeneID" id="8096323"/>
<dbReference type="KEGG" id="tsi:TSIB_1322"/>
<dbReference type="eggNOG" id="arCOG00858">
    <property type="taxonomic scope" value="Archaea"/>
</dbReference>
<dbReference type="HOGENOM" id="CLU_079546_0_0_2"/>
<dbReference type="OrthoDB" id="372251at2157"/>
<dbReference type="UniPathway" id="UPA00159">
    <property type="reaction ID" value="UER00275"/>
</dbReference>
<dbReference type="Proteomes" id="UP000009079">
    <property type="component" value="Chromosome"/>
</dbReference>
<dbReference type="GO" id="GO:0005737">
    <property type="term" value="C:cytoplasm"/>
    <property type="evidence" value="ECO:0007669"/>
    <property type="project" value="UniProtKB-SubCell"/>
</dbReference>
<dbReference type="GO" id="GO:0005524">
    <property type="term" value="F:ATP binding"/>
    <property type="evidence" value="ECO:0007669"/>
    <property type="project" value="UniProtKB-KW"/>
</dbReference>
<dbReference type="GO" id="GO:0033862">
    <property type="term" value="F:UMP kinase activity"/>
    <property type="evidence" value="ECO:0007669"/>
    <property type="project" value="UniProtKB-EC"/>
</dbReference>
<dbReference type="GO" id="GO:0044210">
    <property type="term" value="P:'de novo' CTP biosynthetic process"/>
    <property type="evidence" value="ECO:0007669"/>
    <property type="project" value="UniProtKB-UniRule"/>
</dbReference>
<dbReference type="GO" id="GO:0006225">
    <property type="term" value="P:UDP biosynthetic process"/>
    <property type="evidence" value="ECO:0007669"/>
    <property type="project" value="TreeGrafter"/>
</dbReference>
<dbReference type="CDD" id="cd04253">
    <property type="entry name" value="AAK_UMPK-PyrH-Pf"/>
    <property type="match status" value="1"/>
</dbReference>
<dbReference type="FunFam" id="3.40.1160.10:FF:000030">
    <property type="entry name" value="Uridylate kinase"/>
    <property type="match status" value="1"/>
</dbReference>
<dbReference type="Gene3D" id="3.40.1160.10">
    <property type="entry name" value="Acetylglutamate kinase-like"/>
    <property type="match status" value="1"/>
</dbReference>
<dbReference type="HAMAP" id="MF_01220_A">
    <property type="entry name" value="PyrH_A"/>
    <property type="match status" value="1"/>
</dbReference>
<dbReference type="InterPro" id="IPR036393">
    <property type="entry name" value="AceGlu_kinase-like_sf"/>
</dbReference>
<dbReference type="InterPro" id="IPR001048">
    <property type="entry name" value="Asp/Glu/Uridylate_kinase"/>
</dbReference>
<dbReference type="InterPro" id="IPR011817">
    <property type="entry name" value="Uridylate_kinase"/>
</dbReference>
<dbReference type="InterPro" id="IPR011818">
    <property type="entry name" value="Uridylate_kinase_arch/spir"/>
</dbReference>
<dbReference type="NCBIfam" id="TIGR02076">
    <property type="entry name" value="pyrH_arch"/>
    <property type="match status" value="1"/>
</dbReference>
<dbReference type="PANTHER" id="PTHR42833">
    <property type="entry name" value="URIDYLATE KINASE"/>
    <property type="match status" value="1"/>
</dbReference>
<dbReference type="PANTHER" id="PTHR42833:SF4">
    <property type="entry name" value="URIDYLATE KINASE PUMPKIN, CHLOROPLASTIC"/>
    <property type="match status" value="1"/>
</dbReference>
<dbReference type="Pfam" id="PF00696">
    <property type="entry name" value="AA_kinase"/>
    <property type="match status" value="1"/>
</dbReference>
<dbReference type="PIRSF" id="PIRSF005650">
    <property type="entry name" value="Uridylate_kin"/>
    <property type="match status" value="1"/>
</dbReference>
<dbReference type="SUPFAM" id="SSF53633">
    <property type="entry name" value="Carbamate kinase-like"/>
    <property type="match status" value="1"/>
</dbReference>
<keyword id="KW-0067">ATP-binding</keyword>
<keyword id="KW-0963">Cytoplasm</keyword>
<keyword id="KW-0418">Kinase</keyword>
<keyword id="KW-0547">Nucleotide-binding</keyword>
<keyword id="KW-0665">Pyrimidine biosynthesis</keyword>
<keyword id="KW-1185">Reference proteome</keyword>
<keyword id="KW-0808">Transferase</keyword>
<evidence type="ECO:0000255" key="1">
    <source>
        <dbReference type="HAMAP-Rule" id="MF_01220"/>
    </source>
</evidence>
<protein>
    <recommendedName>
        <fullName evidence="1">Uridylate kinase</fullName>
        <shortName evidence="1">UK</shortName>
        <ecNumber evidence="1">2.7.4.22</ecNumber>
    </recommendedName>
    <alternativeName>
        <fullName evidence="1">Uridine monophosphate kinase</fullName>
        <shortName evidence="1">UMP kinase</shortName>
        <shortName evidence="1">UMPK</shortName>
    </alternativeName>
</protein>
<gene>
    <name evidence="1" type="primary">pyrH</name>
    <name type="ordered locus">TSIB_1322</name>
</gene>
<accession>C6A429</accession>
<reference key="1">
    <citation type="journal article" date="2009" name="Appl. Environ. Microbiol.">
        <title>Metabolic versatility and indigenous origin of the archaeon Thermococcus sibiricus, isolated from a siberian oil reservoir, as revealed by genome analysis.</title>
        <authorList>
            <person name="Mardanov A.V."/>
            <person name="Ravin N.V."/>
            <person name="Svetlitchnyi V.A."/>
            <person name="Beletsky A.V."/>
            <person name="Miroshnichenko M.L."/>
            <person name="Bonch-Osmolovskaya E.A."/>
            <person name="Skryabin K.G."/>
        </authorList>
    </citation>
    <scope>NUCLEOTIDE SEQUENCE [LARGE SCALE GENOMIC DNA]</scope>
    <source>
        <strain>DSM 12597 / MM 739</strain>
    </source>
</reference>
<proteinExistence type="inferred from homology"/>
<organism>
    <name type="scientific">Thermococcus sibiricus (strain DSM 12597 / MM 739)</name>
    <dbReference type="NCBI Taxonomy" id="604354"/>
    <lineage>
        <taxon>Archaea</taxon>
        <taxon>Methanobacteriati</taxon>
        <taxon>Methanobacteriota</taxon>
        <taxon>Thermococci</taxon>
        <taxon>Thermococcales</taxon>
        <taxon>Thermococcaceae</taxon>
        <taxon>Thermococcus</taxon>
    </lineage>
</organism>
<comment type="function">
    <text evidence="1">Catalyzes the reversible phosphorylation of UMP to UDP.</text>
</comment>
<comment type="catalytic activity">
    <reaction evidence="1">
        <text>UMP + ATP = UDP + ADP</text>
        <dbReference type="Rhea" id="RHEA:24400"/>
        <dbReference type="ChEBI" id="CHEBI:30616"/>
        <dbReference type="ChEBI" id="CHEBI:57865"/>
        <dbReference type="ChEBI" id="CHEBI:58223"/>
        <dbReference type="ChEBI" id="CHEBI:456216"/>
        <dbReference type="EC" id="2.7.4.22"/>
    </reaction>
</comment>
<comment type="activity regulation">
    <text evidence="1">Inhibited by UTP.</text>
</comment>
<comment type="pathway">
    <text evidence="1">Pyrimidine metabolism; CTP biosynthesis via de novo pathway; UDP from UMP (UMPK route): step 1/1.</text>
</comment>
<comment type="subunit">
    <text evidence="1">Homohexamer.</text>
</comment>
<comment type="subcellular location">
    <subcellularLocation>
        <location evidence="1">Cytoplasm</location>
    </subcellularLocation>
</comment>
<comment type="similarity">
    <text evidence="1">Belongs to the UMP kinase family.</text>
</comment>
<sequence length="225" mass="24604">MRIVFDIGGSVLVPDEPDVKFIEEIAYQLTKISEDHEVAVVVGGGRVAREYIQAAKSFTPNETFKDYIGIHITRANAMLLIAALREKAYPFVVSDFRKAWEVMQLKKIPIMGGTHPGHTTDAVAALLAEYLQADLLVVITNVDGVYDSDPKKNPNAKKLDRISTEKLVEIAMQSESKAGGSGVVDALAAKFIQRGEIKTLIIGKDDARTLFDAIKGKHKGTLVEP</sequence>
<feature type="chain" id="PRO_1000213961" description="Uridylate kinase">
    <location>
        <begin position="1"/>
        <end position="225"/>
    </location>
</feature>
<feature type="binding site" evidence="1">
    <location>
        <begin position="9"/>
        <end position="10"/>
    </location>
    <ligand>
        <name>ATP</name>
        <dbReference type="ChEBI" id="CHEBI:30616"/>
    </ligand>
</feature>
<feature type="binding site" evidence="1">
    <location>
        <position position="44"/>
    </location>
    <ligand>
        <name>UMP</name>
        <dbReference type="ChEBI" id="CHEBI:57865"/>
    </ligand>
</feature>
<feature type="binding site" evidence="1">
    <location>
        <position position="45"/>
    </location>
    <ligand>
        <name>ATP</name>
        <dbReference type="ChEBI" id="CHEBI:30616"/>
    </ligand>
</feature>
<feature type="binding site" evidence="1">
    <location>
        <position position="49"/>
    </location>
    <ligand>
        <name>ATP</name>
        <dbReference type="ChEBI" id="CHEBI:30616"/>
    </ligand>
</feature>
<feature type="binding site" evidence="1">
    <location>
        <position position="66"/>
    </location>
    <ligand>
        <name>UMP</name>
        <dbReference type="ChEBI" id="CHEBI:57865"/>
    </ligand>
</feature>
<feature type="binding site" evidence="1">
    <location>
        <begin position="114"/>
        <end position="120"/>
    </location>
    <ligand>
        <name>UMP</name>
        <dbReference type="ChEBI" id="CHEBI:57865"/>
    </ligand>
</feature>
<feature type="binding site" evidence="1">
    <location>
        <position position="140"/>
    </location>
    <ligand>
        <name>ATP</name>
        <dbReference type="ChEBI" id="CHEBI:30616"/>
    </ligand>
</feature>
<feature type="binding site" evidence="1">
    <location>
        <position position="141"/>
    </location>
    <ligand>
        <name>ATP</name>
        <dbReference type="ChEBI" id="CHEBI:30616"/>
    </ligand>
</feature>
<feature type="binding site" evidence="1">
    <location>
        <position position="146"/>
    </location>
    <ligand>
        <name>ATP</name>
        <dbReference type="ChEBI" id="CHEBI:30616"/>
    </ligand>
</feature>
<feature type="binding site" evidence="1">
    <location>
        <position position="149"/>
    </location>
    <ligand>
        <name>ATP</name>
        <dbReference type="ChEBI" id="CHEBI:30616"/>
    </ligand>
</feature>